<gene>
    <name type="ordered locus">AF_2251</name>
</gene>
<reference key="1">
    <citation type="journal article" date="1997" name="Nature">
        <title>The complete genome sequence of the hyperthermophilic, sulphate-reducing archaeon Archaeoglobus fulgidus.</title>
        <authorList>
            <person name="Klenk H.-P."/>
            <person name="Clayton R.A."/>
            <person name="Tomb J.-F."/>
            <person name="White O."/>
            <person name="Nelson K.E."/>
            <person name="Ketchum K.A."/>
            <person name="Dodson R.J."/>
            <person name="Gwinn M.L."/>
            <person name="Hickey E.K."/>
            <person name="Peterson J.D."/>
            <person name="Richardson D.L."/>
            <person name="Kerlavage A.R."/>
            <person name="Graham D.E."/>
            <person name="Kyrpides N.C."/>
            <person name="Fleischmann R.D."/>
            <person name="Quackenbush J."/>
            <person name="Lee N.H."/>
            <person name="Sutton G.G."/>
            <person name="Gill S.R."/>
            <person name="Kirkness E.F."/>
            <person name="Dougherty B.A."/>
            <person name="McKenney K."/>
            <person name="Adams M.D."/>
            <person name="Loftus B.J."/>
            <person name="Peterson S.N."/>
            <person name="Reich C.I."/>
            <person name="McNeil L.K."/>
            <person name="Badger J.H."/>
            <person name="Glodek A."/>
            <person name="Zhou L."/>
            <person name="Overbeek R."/>
            <person name="Gocayne J.D."/>
            <person name="Weidman J.F."/>
            <person name="McDonald L.A."/>
            <person name="Utterback T.R."/>
            <person name="Cotton M.D."/>
            <person name="Spriggs T."/>
            <person name="Artiach P."/>
            <person name="Kaine B.P."/>
            <person name="Sykes S.M."/>
            <person name="Sadow P.W."/>
            <person name="D'Andrea K.P."/>
            <person name="Bowman C."/>
            <person name="Fujii C."/>
            <person name="Garland S.A."/>
            <person name="Mason T.M."/>
            <person name="Olsen G.J."/>
            <person name="Fraser C.M."/>
            <person name="Smith H.O."/>
            <person name="Woese C.R."/>
            <person name="Venter J.C."/>
        </authorList>
    </citation>
    <scope>NUCLEOTIDE SEQUENCE [LARGE SCALE GENOMIC DNA]</scope>
    <source>
        <strain>ATCC 49558 / DSM 4304 / JCM 9628 / NBRC 100126 / VC-16</strain>
    </source>
</reference>
<keyword id="KW-1185">Reference proteome</keyword>
<dbReference type="EMBL" id="AE000782">
    <property type="protein sequence ID" value="AAB89006.1"/>
    <property type="molecule type" value="Genomic_DNA"/>
</dbReference>
<dbReference type="PIR" id="C69531">
    <property type="entry name" value="C69531"/>
</dbReference>
<dbReference type="RefSeq" id="WP_010879740.1">
    <property type="nucleotide sequence ID" value="NC_000917.1"/>
</dbReference>
<dbReference type="SMR" id="O28033"/>
<dbReference type="STRING" id="224325.AF_2251"/>
<dbReference type="PaxDb" id="224325-AF_2251"/>
<dbReference type="EnsemblBacteria" id="AAB89006">
    <property type="protein sequence ID" value="AAB89006"/>
    <property type="gene ID" value="AF_2251"/>
</dbReference>
<dbReference type="GeneID" id="1485482"/>
<dbReference type="KEGG" id="afu:AF_2251"/>
<dbReference type="eggNOG" id="arCOG00215">
    <property type="taxonomic scope" value="Archaea"/>
</dbReference>
<dbReference type="HOGENOM" id="CLU_030805_0_2_2"/>
<dbReference type="OrthoDB" id="372037at2157"/>
<dbReference type="PhylomeDB" id="O28033"/>
<dbReference type="Proteomes" id="UP000002199">
    <property type="component" value="Chromosome"/>
</dbReference>
<dbReference type="CDD" id="cd00885">
    <property type="entry name" value="cinA"/>
    <property type="match status" value="1"/>
</dbReference>
<dbReference type="Gene3D" id="3.40.980.10">
    <property type="entry name" value="MoaB/Mog-like domain"/>
    <property type="match status" value="1"/>
</dbReference>
<dbReference type="HAMAP" id="MF_00226_A">
    <property type="entry name" value="CinA_A"/>
    <property type="match status" value="1"/>
</dbReference>
<dbReference type="InterPro" id="IPR050101">
    <property type="entry name" value="CinA"/>
</dbReference>
<dbReference type="InterPro" id="IPR023055">
    <property type="entry name" value="CinA_Arc"/>
</dbReference>
<dbReference type="InterPro" id="IPR056596">
    <property type="entry name" value="FLAD1_M"/>
</dbReference>
<dbReference type="InterPro" id="IPR036425">
    <property type="entry name" value="MoaB/Mog-like_dom_sf"/>
</dbReference>
<dbReference type="InterPro" id="IPR001453">
    <property type="entry name" value="MoaB/Mog_dom"/>
</dbReference>
<dbReference type="NCBIfam" id="TIGR00177">
    <property type="entry name" value="molyb_syn"/>
    <property type="match status" value="1"/>
</dbReference>
<dbReference type="PANTHER" id="PTHR13939">
    <property type="entry name" value="NICOTINAMIDE-NUCLEOTIDE AMIDOHYDROLASE PNCC"/>
    <property type="match status" value="1"/>
</dbReference>
<dbReference type="PANTHER" id="PTHR13939:SF0">
    <property type="entry name" value="NMN AMIDOHYDROLASE-LIKE PROTEIN YFAY"/>
    <property type="match status" value="1"/>
</dbReference>
<dbReference type="Pfam" id="PF24102">
    <property type="entry name" value="FLAD1_M"/>
    <property type="match status" value="1"/>
</dbReference>
<dbReference type="Pfam" id="PF00994">
    <property type="entry name" value="MoCF_biosynth"/>
    <property type="match status" value="1"/>
</dbReference>
<dbReference type="SMART" id="SM00852">
    <property type="entry name" value="MoCF_biosynth"/>
    <property type="match status" value="1"/>
</dbReference>
<dbReference type="SUPFAM" id="SSF53218">
    <property type="entry name" value="Molybdenum cofactor biosynthesis proteins"/>
    <property type="match status" value="1"/>
</dbReference>
<name>Y2251_ARCFU</name>
<feature type="chain" id="PRO_0000156797" description="Protein AF_2251">
    <location>
        <begin position="1"/>
        <end position="229"/>
    </location>
</feature>
<evidence type="ECO:0000255" key="1">
    <source>
        <dbReference type="HAMAP-Rule" id="MF_00226"/>
    </source>
</evidence>
<proteinExistence type="inferred from homology"/>
<comment type="similarity">
    <text evidence="1">Belongs to the CinA family.</text>
</comment>
<organism>
    <name type="scientific">Archaeoglobus fulgidus (strain ATCC 49558 / DSM 4304 / JCM 9628 / NBRC 100126 / VC-16)</name>
    <dbReference type="NCBI Taxonomy" id="224325"/>
    <lineage>
        <taxon>Archaea</taxon>
        <taxon>Methanobacteriati</taxon>
        <taxon>Methanobacteriota</taxon>
        <taxon>Archaeoglobi</taxon>
        <taxon>Archaeoglobales</taxon>
        <taxon>Archaeoglobaceae</taxon>
        <taxon>Archaeoglobus</taxon>
    </lineage>
</organism>
<sequence length="229" mass="25521">MEFIIISVGNEILSGDITNTNAAYMAKKLTRAGHKVKKIITIPDDVNIIAEEVRKASKEADFVLVTGGLGATHDDVTAEGIARAFNRKLVISKEVYEWLSKLSKNEEAVRKISSVPEGSEIVWNDVGAAPAFIVENVAVMPGVPAEMENTFEKILERFEKGEYHEEVVKVNGFEVKIVDKLNQVVRDNPDVEIGSYPKPGYVMVKFSGRDKEKVKKAVKQFEELLNDKR</sequence>
<protein>
    <recommendedName>
        <fullName evidence="1">Protein AF_2251</fullName>
    </recommendedName>
</protein>
<accession>O28033</accession>